<dbReference type="EC" id="2.7.7.89" evidence="1"/>
<dbReference type="EC" id="2.7.7.42" evidence="1"/>
<dbReference type="EMBL" id="BX640414">
    <property type="protein sequence ID" value="CAE41556.1"/>
    <property type="status" value="ALT_INIT"/>
    <property type="molecule type" value="Genomic_DNA"/>
</dbReference>
<dbReference type="RefSeq" id="NP_880032.1">
    <property type="nucleotide sequence ID" value="NC_002929.2"/>
</dbReference>
<dbReference type="RefSeq" id="WP_050865593.1">
    <property type="nucleotide sequence ID" value="NC_002929.2"/>
</dbReference>
<dbReference type="SMR" id="Q7VYQ0"/>
<dbReference type="STRING" id="257313.BP1260"/>
<dbReference type="PaxDb" id="257313-BP1260"/>
<dbReference type="KEGG" id="bpe:BP1260"/>
<dbReference type="PATRIC" id="fig|257313.5.peg.1357"/>
<dbReference type="eggNOG" id="COG1391">
    <property type="taxonomic scope" value="Bacteria"/>
</dbReference>
<dbReference type="HOGENOM" id="CLU_006233_0_1_4"/>
<dbReference type="Proteomes" id="UP000002676">
    <property type="component" value="Chromosome"/>
</dbReference>
<dbReference type="GO" id="GO:0005829">
    <property type="term" value="C:cytosol"/>
    <property type="evidence" value="ECO:0007669"/>
    <property type="project" value="TreeGrafter"/>
</dbReference>
<dbReference type="GO" id="GO:0008882">
    <property type="term" value="F:[glutamate-ammonia-ligase] adenylyltransferase activity"/>
    <property type="evidence" value="ECO:0007669"/>
    <property type="project" value="UniProtKB-UniRule"/>
</dbReference>
<dbReference type="GO" id="GO:0047388">
    <property type="term" value="F:[glutamine synthetase]-adenylyl-L-tyrosine phosphorylase activity"/>
    <property type="evidence" value="ECO:0007669"/>
    <property type="project" value="UniProtKB-EC"/>
</dbReference>
<dbReference type="GO" id="GO:0005524">
    <property type="term" value="F:ATP binding"/>
    <property type="evidence" value="ECO:0007669"/>
    <property type="project" value="UniProtKB-UniRule"/>
</dbReference>
<dbReference type="GO" id="GO:0000287">
    <property type="term" value="F:magnesium ion binding"/>
    <property type="evidence" value="ECO:0007669"/>
    <property type="project" value="UniProtKB-UniRule"/>
</dbReference>
<dbReference type="GO" id="GO:0000820">
    <property type="term" value="P:regulation of glutamine family amino acid metabolic process"/>
    <property type="evidence" value="ECO:0007669"/>
    <property type="project" value="UniProtKB-UniRule"/>
</dbReference>
<dbReference type="CDD" id="cd05401">
    <property type="entry name" value="NT_GlnE_GlnD_like"/>
    <property type="match status" value="2"/>
</dbReference>
<dbReference type="FunFam" id="1.20.120.330:FF:000005">
    <property type="entry name" value="Bifunctional glutamine synthetase adenylyltransferase/adenylyl-removing enzyme"/>
    <property type="match status" value="1"/>
</dbReference>
<dbReference type="Gene3D" id="1.20.120.1510">
    <property type="match status" value="1"/>
</dbReference>
<dbReference type="Gene3D" id="3.30.460.10">
    <property type="entry name" value="Beta Polymerase, domain 2"/>
    <property type="match status" value="2"/>
</dbReference>
<dbReference type="Gene3D" id="1.20.120.330">
    <property type="entry name" value="Nucleotidyltransferases domain 2"/>
    <property type="match status" value="2"/>
</dbReference>
<dbReference type="HAMAP" id="MF_00802">
    <property type="entry name" value="GlnE"/>
    <property type="match status" value="1"/>
</dbReference>
<dbReference type="InterPro" id="IPR023057">
    <property type="entry name" value="GlnE"/>
</dbReference>
<dbReference type="InterPro" id="IPR005190">
    <property type="entry name" value="GlnE_rpt_dom"/>
</dbReference>
<dbReference type="InterPro" id="IPR043519">
    <property type="entry name" value="NT_sf"/>
</dbReference>
<dbReference type="InterPro" id="IPR013546">
    <property type="entry name" value="PII_UdlTrfase/GS_AdlTrfase"/>
</dbReference>
<dbReference type="NCBIfam" id="NF008292">
    <property type="entry name" value="PRK11072.1"/>
    <property type="match status" value="1"/>
</dbReference>
<dbReference type="PANTHER" id="PTHR30621:SF0">
    <property type="entry name" value="BIFUNCTIONAL GLUTAMINE SYNTHETASE ADENYLYLTRANSFERASE_ADENYLYL-REMOVING ENZYME"/>
    <property type="match status" value="1"/>
</dbReference>
<dbReference type="PANTHER" id="PTHR30621">
    <property type="entry name" value="GLUTAMINE SYNTHETASE ADENYLYLTRANSFERASE"/>
    <property type="match status" value="1"/>
</dbReference>
<dbReference type="Pfam" id="PF08335">
    <property type="entry name" value="GlnD_UR_UTase"/>
    <property type="match status" value="1"/>
</dbReference>
<dbReference type="Pfam" id="PF03710">
    <property type="entry name" value="GlnE"/>
    <property type="match status" value="2"/>
</dbReference>
<dbReference type="SUPFAM" id="SSF81301">
    <property type="entry name" value="Nucleotidyltransferase"/>
    <property type="match status" value="2"/>
</dbReference>
<dbReference type="SUPFAM" id="SSF81593">
    <property type="entry name" value="Nucleotidyltransferase substrate binding subunit/domain"/>
    <property type="match status" value="2"/>
</dbReference>
<gene>
    <name evidence="1" type="primary">glnE</name>
    <name type="ordered locus">BP1260</name>
</gene>
<organism>
    <name type="scientific">Bordetella pertussis (strain Tohama I / ATCC BAA-589 / NCTC 13251)</name>
    <dbReference type="NCBI Taxonomy" id="257313"/>
    <lineage>
        <taxon>Bacteria</taxon>
        <taxon>Pseudomonadati</taxon>
        <taxon>Pseudomonadota</taxon>
        <taxon>Betaproteobacteria</taxon>
        <taxon>Burkholderiales</taxon>
        <taxon>Alcaligenaceae</taxon>
        <taxon>Bordetella</taxon>
    </lineage>
</organism>
<feature type="chain" id="PRO_0000209233" description="Bifunctional glutamine synthetase adenylyltransferase/adenylyl-removing enzyme">
    <location>
        <begin position="1"/>
        <end position="941"/>
    </location>
</feature>
<feature type="region of interest" description="Adenylyl removase" evidence="1">
    <location>
        <begin position="1"/>
        <end position="431"/>
    </location>
</feature>
<feature type="region of interest" description="Adenylyl transferase" evidence="1">
    <location>
        <begin position="447"/>
        <end position="941"/>
    </location>
</feature>
<accession>Q7VYQ0</accession>
<comment type="function">
    <text evidence="1">Involved in the regulation of glutamine synthetase GlnA, a key enzyme in the process to assimilate ammonia. When cellular nitrogen levels are high, the C-terminal adenylyl transferase (AT) inactivates GlnA by covalent transfer of an adenylyl group from ATP to specific tyrosine residue of GlnA, thus reducing its activity. Conversely, when nitrogen levels are low, the N-terminal adenylyl removase (AR) activates GlnA by removing the adenylyl group by phosphorolysis, increasing its activity. The regulatory region of GlnE binds the signal transduction protein PII (GlnB) which indicates the nitrogen status of the cell.</text>
</comment>
<comment type="catalytic activity">
    <reaction evidence="1">
        <text>[glutamine synthetase]-O(4)-(5'-adenylyl)-L-tyrosine + phosphate = [glutamine synthetase]-L-tyrosine + ADP</text>
        <dbReference type="Rhea" id="RHEA:43716"/>
        <dbReference type="Rhea" id="RHEA-COMP:10660"/>
        <dbReference type="Rhea" id="RHEA-COMP:10661"/>
        <dbReference type="ChEBI" id="CHEBI:43474"/>
        <dbReference type="ChEBI" id="CHEBI:46858"/>
        <dbReference type="ChEBI" id="CHEBI:83624"/>
        <dbReference type="ChEBI" id="CHEBI:456216"/>
        <dbReference type="EC" id="2.7.7.89"/>
    </reaction>
</comment>
<comment type="catalytic activity">
    <reaction evidence="1">
        <text>[glutamine synthetase]-L-tyrosine + ATP = [glutamine synthetase]-O(4)-(5'-adenylyl)-L-tyrosine + diphosphate</text>
        <dbReference type="Rhea" id="RHEA:18589"/>
        <dbReference type="Rhea" id="RHEA-COMP:10660"/>
        <dbReference type="Rhea" id="RHEA-COMP:10661"/>
        <dbReference type="ChEBI" id="CHEBI:30616"/>
        <dbReference type="ChEBI" id="CHEBI:33019"/>
        <dbReference type="ChEBI" id="CHEBI:46858"/>
        <dbReference type="ChEBI" id="CHEBI:83624"/>
        <dbReference type="EC" id="2.7.7.42"/>
    </reaction>
</comment>
<comment type="cofactor">
    <cofactor evidence="1">
        <name>Mg(2+)</name>
        <dbReference type="ChEBI" id="CHEBI:18420"/>
    </cofactor>
</comment>
<comment type="similarity">
    <text evidence="1">Belongs to the GlnE family.</text>
</comment>
<comment type="sequence caution" evidence="2">
    <conflict type="erroneous initiation">
        <sequence resource="EMBL-CDS" id="CAE41556"/>
    </conflict>
</comment>
<protein>
    <recommendedName>
        <fullName evidence="1">Bifunctional glutamine synthetase adenylyltransferase/adenylyl-removing enzyme</fullName>
    </recommendedName>
    <alternativeName>
        <fullName evidence="1">ATP:glutamine synthetase adenylyltransferase</fullName>
    </alternativeName>
    <alternativeName>
        <fullName evidence="1">ATase</fullName>
    </alternativeName>
    <domain>
        <recommendedName>
            <fullName evidence="1">Glutamine synthetase adenylyl-L-tyrosine phosphorylase</fullName>
            <ecNumber evidence="1">2.7.7.89</ecNumber>
        </recommendedName>
        <alternativeName>
            <fullName evidence="1">Adenylyl removase</fullName>
            <shortName evidence="1">AR</shortName>
            <shortName evidence="1">AT-N</shortName>
        </alternativeName>
    </domain>
    <domain>
        <recommendedName>
            <fullName evidence="1">Glutamine synthetase adenylyl transferase</fullName>
            <ecNumber evidence="1">2.7.7.42</ecNumber>
        </recommendedName>
        <alternativeName>
            <fullName evidence="1">Adenylyl transferase</fullName>
            <shortName evidence="1">AT</shortName>
            <shortName evidence="1">AT-C</shortName>
        </alternativeName>
    </domain>
</protein>
<reference key="1">
    <citation type="journal article" date="2003" name="Nat. Genet.">
        <title>Comparative analysis of the genome sequences of Bordetella pertussis, Bordetella parapertussis and Bordetella bronchiseptica.</title>
        <authorList>
            <person name="Parkhill J."/>
            <person name="Sebaihia M."/>
            <person name="Preston A."/>
            <person name="Murphy L.D."/>
            <person name="Thomson N.R."/>
            <person name="Harris D.E."/>
            <person name="Holden M.T.G."/>
            <person name="Churcher C.M."/>
            <person name="Bentley S.D."/>
            <person name="Mungall K.L."/>
            <person name="Cerdeno-Tarraga A.-M."/>
            <person name="Temple L."/>
            <person name="James K.D."/>
            <person name="Harris B."/>
            <person name="Quail M.A."/>
            <person name="Achtman M."/>
            <person name="Atkin R."/>
            <person name="Baker S."/>
            <person name="Basham D."/>
            <person name="Bason N."/>
            <person name="Cherevach I."/>
            <person name="Chillingworth T."/>
            <person name="Collins M."/>
            <person name="Cronin A."/>
            <person name="Davis P."/>
            <person name="Doggett J."/>
            <person name="Feltwell T."/>
            <person name="Goble A."/>
            <person name="Hamlin N."/>
            <person name="Hauser H."/>
            <person name="Holroyd S."/>
            <person name="Jagels K."/>
            <person name="Leather S."/>
            <person name="Moule S."/>
            <person name="Norberczak H."/>
            <person name="O'Neil S."/>
            <person name="Ormond D."/>
            <person name="Price C."/>
            <person name="Rabbinowitsch E."/>
            <person name="Rutter S."/>
            <person name="Sanders M."/>
            <person name="Saunders D."/>
            <person name="Seeger K."/>
            <person name="Sharp S."/>
            <person name="Simmonds M."/>
            <person name="Skelton J."/>
            <person name="Squares R."/>
            <person name="Squares S."/>
            <person name="Stevens K."/>
            <person name="Unwin L."/>
            <person name="Whitehead S."/>
            <person name="Barrell B.G."/>
            <person name="Maskell D.J."/>
        </authorList>
    </citation>
    <scope>NUCLEOTIDE SEQUENCE [LARGE SCALE GENOMIC DNA]</scope>
    <source>
        <strain>Tohama I / ATCC BAA-589 / NCTC 13251</strain>
    </source>
</reference>
<evidence type="ECO:0000255" key="1">
    <source>
        <dbReference type="HAMAP-Rule" id="MF_00802"/>
    </source>
</evidence>
<evidence type="ECO:0000305" key="2"/>
<keyword id="KW-0067">ATP-binding</keyword>
<keyword id="KW-0460">Magnesium</keyword>
<keyword id="KW-0511">Multifunctional enzyme</keyword>
<keyword id="KW-0547">Nucleotide-binding</keyword>
<keyword id="KW-0548">Nucleotidyltransferase</keyword>
<keyword id="KW-1185">Reference proteome</keyword>
<keyword id="KW-0808">Transferase</keyword>
<proteinExistence type="inferred from homology"/>
<sequence>MSSAPPFAAALAWSGHLRRRLDAHPDLAAWLANACAHPVSANVLAAWQAELSGPDAPEVLPVEQCRGMLRKLRERVFLTLIVRDLGGQADLEEVVGAMTVLADIAVGTAYRSVAAELAAVHGLPREQSTGDPQEMLIVGMGKLGGRELNVSSDIDLVMLYGDEGETDGPRRISNHEFYGRLTRRMMPVLSEVDADGQVFRTDLRLRPDGDAGPLAWSLDALEHYLIGQGREWERYAWLKARLMPAQAFADSNPDAQARQLESLRVPFVYRKYFDFDALAALRALRERIRQDWQRRALARNGVDSANNIKLGDGGIREIEFIVQLSQLIRGGRMPALQRRGLLEALHAERAAGLVPEGDAQKLEAAYRFLRRTEHALQYREDEQTHLLPADPAQRAALAAALGYEPAAFERTLAEHRAFVSQTFRNAFRLAGMGEEDDSPAPARTHANGHAMRPHAGALHDIEERLAGQIQRDFPEHAEDLLRRTETLLGSHRVRSLPDSSRHRLEALLPAALTAATQTSAPMDAALRLFDLIETIAQRSAYLALLAEYPDTLARVARMVAASPWAAQYLTQHPLLLDSLIDWRTLFEPLDFAQVAHQLAADLDACRLPDGEPDIERQMNLMRDVQRQASFQLLAQDLEGELTVEKLADQLSALADLLLAETIRRVWPLVNRRPGAEPHLAVIAYGKLGGKELGYASDLDLVFLFDDDREDAAELYAKLGRRMTSWLSTMTSSGRLYEVDLRLRPDGNAGLLAVSLEAFEQYQRSHAWPWEHQALTRARYAAGDTEAGARFERIRADILVMPRDVQALRGEVLGMRDKISAGHPNRSELFDVKHDRGGMVGVEFVTQYLVLCHAATHRVLVNNLGNIALLRLAGEAGLIPAPLALAAGDAYRTLRRAQHQLRLKGVDKARVPPGQLAAERATVCELWQTVLQDGTIAQAEVK</sequence>
<name>GLNE_BORPE</name>